<sequence>MLEAGIDIIEISRLERSIKRHPRLLARVFTPAEVAYCLARHRPGASLAARFAAKEAVMKALGIGLGRCSWQDIEITREQGGRPRVILHNRARQLARELGVGEITVSLSHCHAYAAAVALVESSFSEEG</sequence>
<reference key="1">
    <citation type="journal article" date="2008" name="Environ. Microbiol.">
        <title>The complete genome sequence of Moorella thermoacetica (f. Clostridium thermoaceticum).</title>
        <authorList>
            <person name="Pierce E."/>
            <person name="Xie G."/>
            <person name="Barabote R.D."/>
            <person name="Saunders E."/>
            <person name="Han C.S."/>
            <person name="Detter J.C."/>
            <person name="Richardson P."/>
            <person name="Brettin T.S."/>
            <person name="Das A."/>
            <person name="Ljungdahl L.G."/>
            <person name="Ragsdale S.W."/>
        </authorList>
    </citation>
    <scope>NUCLEOTIDE SEQUENCE [LARGE SCALE GENOMIC DNA]</scope>
    <source>
        <strain>ATCC 39073 / JCM 9320</strain>
    </source>
</reference>
<protein>
    <recommendedName>
        <fullName evidence="1">Holo-[acyl-carrier-protein] synthase</fullName>
        <shortName evidence="1">Holo-ACP synthase</shortName>
        <ecNumber evidence="1">2.7.8.7</ecNumber>
    </recommendedName>
    <alternativeName>
        <fullName evidence="1">4'-phosphopantetheinyl transferase AcpS</fullName>
    </alternativeName>
</protein>
<proteinExistence type="inferred from homology"/>
<evidence type="ECO:0000255" key="1">
    <source>
        <dbReference type="HAMAP-Rule" id="MF_00101"/>
    </source>
</evidence>
<comment type="function">
    <text evidence="1">Transfers the 4'-phosphopantetheine moiety from coenzyme A to a Ser of acyl-carrier-protein.</text>
</comment>
<comment type="catalytic activity">
    <reaction evidence="1">
        <text>apo-[ACP] + CoA = holo-[ACP] + adenosine 3',5'-bisphosphate + H(+)</text>
        <dbReference type="Rhea" id="RHEA:12068"/>
        <dbReference type="Rhea" id="RHEA-COMP:9685"/>
        <dbReference type="Rhea" id="RHEA-COMP:9690"/>
        <dbReference type="ChEBI" id="CHEBI:15378"/>
        <dbReference type="ChEBI" id="CHEBI:29999"/>
        <dbReference type="ChEBI" id="CHEBI:57287"/>
        <dbReference type="ChEBI" id="CHEBI:58343"/>
        <dbReference type="ChEBI" id="CHEBI:64479"/>
        <dbReference type="EC" id="2.7.8.7"/>
    </reaction>
</comment>
<comment type="cofactor">
    <cofactor evidence="1">
        <name>Mg(2+)</name>
        <dbReference type="ChEBI" id="CHEBI:18420"/>
    </cofactor>
</comment>
<comment type="subcellular location">
    <subcellularLocation>
        <location evidence="1">Cytoplasm</location>
    </subcellularLocation>
</comment>
<comment type="similarity">
    <text evidence="1">Belongs to the P-Pant transferase superfamily. AcpS family.</text>
</comment>
<dbReference type="EC" id="2.7.8.7" evidence="1"/>
<dbReference type="EMBL" id="CP000232">
    <property type="protein sequence ID" value="ABC20458.1"/>
    <property type="molecule type" value="Genomic_DNA"/>
</dbReference>
<dbReference type="RefSeq" id="YP_431001.1">
    <property type="nucleotide sequence ID" value="NC_007644.1"/>
</dbReference>
<dbReference type="SMR" id="Q2RGI1"/>
<dbReference type="STRING" id="264732.Moth_2169"/>
<dbReference type="EnsemblBacteria" id="ABC20458">
    <property type="protein sequence ID" value="ABC20458"/>
    <property type="gene ID" value="Moth_2169"/>
</dbReference>
<dbReference type="KEGG" id="mta:Moth_2169"/>
<dbReference type="PATRIC" id="fig|264732.11.peg.2363"/>
<dbReference type="eggNOG" id="COG0736">
    <property type="taxonomic scope" value="Bacteria"/>
</dbReference>
<dbReference type="HOGENOM" id="CLU_089696_0_2_9"/>
<dbReference type="OrthoDB" id="517356at2"/>
<dbReference type="GO" id="GO:0005737">
    <property type="term" value="C:cytoplasm"/>
    <property type="evidence" value="ECO:0007669"/>
    <property type="project" value="UniProtKB-SubCell"/>
</dbReference>
<dbReference type="GO" id="GO:0008897">
    <property type="term" value="F:holo-[acyl-carrier-protein] synthase activity"/>
    <property type="evidence" value="ECO:0007669"/>
    <property type="project" value="UniProtKB-UniRule"/>
</dbReference>
<dbReference type="GO" id="GO:0000287">
    <property type="term" value="F:magnesium ion binding"/>
    <property type="evidence" value="ECO:0007669"/>
    <property type="project" value="UniProtKB-UniRule"/>
</dbReference>
<dbReference type="GO" id="GO:0006633">
    <property type="term" value="P:fatty acid biosynthetic process"/>
    <property type="evidence" value="ECO:0007669"/>
    <property type="project" value="UniProtKB-UniRule"/>
</dbReference>
<dbReference type="Gene3D" id="3.90.470.20">
    <property type="entry name" value="4'-phosphopantetheinyl transferase domain"/>
    <property type="match status" value="1"/>
</dbReference>
<dbReference type="HAMAP" id="MF_00101">
    <property type="entry name" value="AcpS"/>
    <property type="match status" value="1"/>
</dbReference>
<dbReference type="InterPro" id="IPR008278">
    <property type="entry name" value="4-PPantetheinyl_Trfase_dom"/>
</dbReference>
<dbReference type="InterPro" id="IPR037143">
    <property type="entry name" value="4-PPantetheinyl_Trfase_dom_sf"/>
</dbReference>
<dbReference type="InterPro" id="IPR002582">
    <property type="entry name" value="ACPS"/>
</dbReference>
<dbReference type="InterPro" id="IPR004568">
    <property type="entry name" value="Ppantetheine-prot_Trfase_dom"/>
</dbReference>
<dbReference type="NCBIfam" id="TIGR00516">
    <property type="entry name" value="acpS"/>
    <property type="match status" value="1"/>
</dbReference>
<dbReference type="NCBIfam" id="TIGR00556">
    <property type="entry name" value="pantethn_trn"/>
    <property type="match status" value="1"/>
</dbReference>
<dbReference type="NCBIfam" id="NF000832">
    <property type="entry name" value="PRK00070.3-2"/>
    <property type="match status" value="1"/>
</dbReference>
<dbReference type="Pfam" id="PF01648">
    <property type="entry name" value="ACPS"/>
    <property type="match status" value="1"/>
</dbReference>
<dbReference type="SUPFAM" id="SSF56214">
    <property type="entry name" value="4'-phosphopantetheinyl transferase"/>
    <property type="match status" value="1"/>
</dbReference>
<organism>
    <name type="scientific">Moorella thermoacetica (strain ATCC 39073 / JCM 9320)</name>
    <dbReference type="NCBI Taxonomy" id="264732"/>
    <lineage>
        <taxon>Bacteria</taxon>
        <taxon>Bacillati</taxon>
        <taxon>Bacillota</taxon>
        <taxon>Clostridia</taxon>
        <taxon>Moorellales</taxon>
        <taxon>Moorellaceae</taxon>
        <taxon>Moorella</taxon>
    </lineage>
</organism>
<gene>
    <name evidence="1" type="primary">acpS</name>
    <name type="ordered locus">Moth_2169</name>
</gene>
<name>ACPS_MOOTA</name>
<accession>Q2RGI1</accession>
<feature type="chain" id="PRO_1000008451" description="Holo-[acyl-carrier-protein] synthase">
    <location>
        <begin position="1"/>
        <end position="128"/>
    </location>
</feature>
<feature type="binding site" evidence="1">
    <location>
        <position position="7"/>
    </location>
    <ligand>
        <name>Mg(2+)</name>
        <dbReference type="ChEBI" id="CHEBI:18420"/>
    </ligand>
</feature>
<feature type="binding site" evidence="1">
    <location>
        <position position="55"/>
    </location>
    <ligand>
        <name>Mg(2+)</name>
        <dbReference type="ChEBI" id="CHEBI:18420"/>
    </ligand>
</feature>
<keyword id="KW-0963">Cytoplasm</keyword>
<keyword id="KW-0275">Fatty acid biosynthesis</keyword>
<keyword id="KW-0276">Fatty acid metabolism</keyword>
<keyword id="KW-0444">Lipid biosynthesis</keyword>
<keyword id="KW-0443">Lipid metabolism</keyword>
<keyword id="KW-0460">Magnesium</keyword>
<keyword id="KW-0479">Metal-binding</keyword>
<keyword id="KW-0808">Transferase</keyword>